<sequence>MAKKVTGYIKLQIPAAKATPAPPVGPALGQHGVNIVQFTKEFNARTANQEGMIIPVVITVYADRSFSFITKTPPAAVLLKKACNLKSGSAAPNKTKVATIKKSEVQKIAELKMPDLNAANVETAISMISGTARSMGITVVED</sequence>
<comment type="function">
    <text evidence="1">Forms part of the ribosomal stalk which helps the ribosome interact with GTP-bound translation factors.</text>
</comment>
<comment type="subunit">
    <text evidence="1">Part of the ribosomal stalk of the 50S ribosomal subunit. Interacts with L10 and the large rRNA to form the base of the stalk. L10 forms an elongated spine to which L12 dimers bind in a sequential fashion forming a multimeric L10(L12)X complex.</text>
</comment>
<comment type="PTM">
    <text evidence="1">One or more lysine residues are methylated.</text>
</comment>
<comment type="similarity">
    <text evidence="1">Belongs to the universal ribosomal protein uL11 family.</text>
</comment>
<name>RL11_LACP7</name>
<feature type="chain" id="PRO_1000083376" description="Large ribosomal subunit protein uL11">
    <location>
        <begin position="1"/>
        <end position="142"/>
    </location>
</feature>
<organism>
    <name type="scientific">Lachnoclostridium phytofermentans (strain ATCC 700394 / DSM 18823 / ISDg)</name>
    <name type="common">Clostridium phytofermentans</name>
    <dbReference type="NCBI Taxonomy" id="357809"/>
    <lineage>
        <taxon>Bacteria</taxon>
        <taxon>Bacillati</taxon>
        <taxon>Bacillota</taxon>
        <taxon>Clostridia</taxon>
        <taxon>Lachnospirales</taxon>
        <taxon>Lachnospiraceae</taxon>
    </lineage>
</organism>
<proteinExistence type="inferred from homology"/>
<evidence type="ECO:0000255" key="1">
    <source>
        <dbReference type="HAMAP-Rule" id="MF_00736"/>
    </source>
</evidence>
<evidence type="ECO:0000305" key="2"/>
<gene>
    <name evidence="1" type="primary">rplK</name>
    <name type="ordered locus">Cphy_3693</name>
</gene>
<keyword id="KW-0488">Methylation</keyword>
<keyword id="KW-1185">Reference proteome</keyword>
<keyword id="KW-0687">Ribonucleoprotein</keyword>
<keyword id="KW-0689">Ribosomal protein</keyword>
<keyword id="KW-0694">RNA-binding</keyword>
<keyword id="KW-0699">rRNA-binding</keyword>
<protein>
    <recommendedName>
        <fullName evidence="1">Large ribosomal subunit protein uL11</fullName>
    </recommendedName>
    <alternativeName>
        <fullName evidence="2">50S ribosomal protein L11</fullName>
    </alternativeName>
</protein>
<reference key="1">
    <citation type="submission" date="2007-11" db="EMBL/GenBank/DDBJ databases">
        <title>Complete genome sequence of Clostridium phytofermentans ISDg.</title>
        <authorList>
            <person name="Leschine S.B."/>
            <person name="Warnick T.A."/>
            <person name="Blanchard J.L."/>
            <person name="Schnell D.J."/>
            <person name="Petit E.L."/>
            <person name="LaTouf W.G."/>
            <person name="Copeland A."/>
            <person name="Lucas S."/>
            <person name="Lapidus A."/>
            <person name="Barry K."/>
            <person name="Glavina del Rio T."/>
            <person name="Dalin E."/>
            <person name="Tice H."/>
            <person name="Pitluck S."/>
            <person name="Kiss H."/>
            <person name="Brettin T."/>
            <person name="Bruce D."/>
            <person name="Detter J.C."/>
            <person name="Han C."/>
            <person name="Kuske C."/>
            <person name="Schmutz J."/>
            <person name="Larimer F."/>
            <person name="Land M."/>
            <person name="Hauser L."/>
            <person name="Kyrpides N."/>
            <person name="Kim E.A."/>
            <person name="Richardson P."/>
        </authorList>
    </citation>
    <scope>NUCLEOTIDE SEQUENCE [LARGE SCALE GENOMIC DNA]</scope>
    <source>
        <strain>ATCC 700394 / DSM 18823 / ISDg</strain>
    </source>
</reference>
<accession>A9KJM0</accession>
<dbReference type="EMBL" id="CP000885">
    <property type="protein sequence ID" value="ABX44040.1"/>
    <property type="molecule type" value="Genomic_DNA"/>
</dbReference>
<dbReference type="RefSeq" id="WP_012201688.1">
    <property type="nucleotide sequence ID" value="NC_010001.1"/>
</dbReference>
<dbReference type="SMR" id="A9KJM0"/>
<dbReference type="STRING" id="357809.Cphy_3693"/>
<dbReference type="KEGG" id="cpy:Cphy_3693"/>
<dbReference type="eggNOG" id="COG0080">
    <property type="taxonomic scope" value="Bacteria"/>
</dbReference>
<dbReference type="HOGENOM" id="CLU_074237_2_1_9"/>
<dbReference type="OrthoDB" id="9802408at2"/>
<dbReference type="Proteomes" id="UP000000370">
    <property type="component" value="Chromosome"/>
</dbReference>
<dbReference type="GO" id="GO:0022625">
    <property type="term" value="C:cytosolic large ribosomal subunit"/>
    <property type="evidence" value="ECO:0007669"/>
    <property type="project" value="TreeGrafter"/>
</dbReference>
<dbReference type="GO" id="GO:0070180">
    <property type="term" value="F:large ribosomal subunit rRNA binding"/>
    <property type="evidence" value="ECO:0007669"/>
    <property type="project" value="UniProtKB-UniRule"/>
</dbReference>
<dbReference type="GO" id="GO:0003735">
    <property type="term" value="F:structural constituent of ribosome"/>
    <property type="evidence" value="ECO:0007669"/>
    <property type="project" value="InterPro"/>
</dbReference>
<dbReference type="GO" id="GO:0006412">
    <property type="term" value="P:translation"/>
    <property type="evidence" value="ECO:0007669"/>
    <property type="project" value="UniProtKB-UniRule"/>
</dbReference>
<dbReference type="CDD" id="cd00349">
    <property type="entry name" value="Ribosomal_L11"/>
    <property type="match status" value="1"/>
</dbReference>
<dbReference type="FunFam" id="1.10.10.250:FF:000001">
    <property type="entry name" value="50S ribosomal protein L11"/>
    <property type="match status" value="1"/>
</dbReference>
<dbReference type="FunFam" id="3.30.1550.10:FF:000001">
    <property type="entry name" value="50S ribosomal protein L11"/>
    <property type="match status" value="1"/>
</dbReference>
<dbReference type="Gene3D" id="1.10.10.250">
    <property type="entry name" value="Ribosomal protein L11, C-terminal domain"/>
    <property type="match status" value="1"/>
</dbReference>
<dbReference type="Gene3D" id="3.30.1550.10">
    <property type="entry name" value="Ribosomal protein L11/L12, N-terminal domain"/>
    <property type="match status" value="1"/>
</dbReference>
<dbReference type="HAMAP" id="MF_00736">
    <property type="entry name" value="Ribosomal_uL11"/>
    <property type="match status" value="1"/>
</dbReference>
<dbReference type="InterPro" id="IPR000911">
    <property type="entry name" value="Ribosomal_uL11"/>
</dbReference>
<dbReference type="InterPro" id="IPR006519">
    <property type="entry name" value="Ribosomal_uL11_bac-typ"/>
</dbReference>
<dbReference type="InterPro" id="IPR020783">
    <property type="entry name" value="Ribosomal_uL11_C"/>
</dbReference>
<dbReference type="InterPro" id="IPR036769">
    <property type="entry name" value="Ribosomal_uL11_C_sf"/>
</dbReference>
<dbReference type="InterPro" id="IPR020784">
    <property type="entry name" value="Ribosomal_uL11_N"/>
</dbReference>
<dbReference type="InterPro" id="IPR036796">
    <property type="entry name" value="Ribosomal_uL11_N_sf"/>
</dbReference>
<dbReference type="NCBIfam" id="TIGR01632">
    <property type="entry name" value="L11_bact"/>
    <property type="match status" value="1"/>
</dbReference>
<dbReference type="PANTHER" id="PTHR11661">
    <property type="entry name" value="60S RIBOSOMAL PROTEIN L12"/>
    <property type="match status" value="1"/>
</dbReference>
<dbReference type="PANTHER" id="PTHR11661:SF1">
    <property type="entry name" value="LARGE RIBOSOMAL SUBUNIT PROTEIN UL11M"/>
    <property type="match status" value="1"/>
</dbReference>
<dbReference type="Pfam" id="PF00298">
    <property type="entry name" value="Ribosomal_L11"/>
    <property type="match status" value="1"/>
</dbReference>
<dbReference type="Pfam" id="PF03946">
    <property type="entry name" value="Ribosomal_L11_N"/>
    <property type="match status" value="1"/>
</dbReference>
<dbReference type="SMART" id="SM00649">
    <property type="entry name" value="RL11"/>
    <property type="match status" value="1"/>
</dbReference>
<dbReference type="SUPFAM" id="SSF54747">
    <property type="entry name" value="Ribosomal L11/L12e N-terminal domain"/>
    <property type="match status" value="1"/>
</dbReference>
<dbReference type="SUPFAM" id="SSF46906">
    <property type="entry name" value="Ribosomal protein L11, C-terminal domain"/>
    <property type="match status" value="1"/>
</dbReference>